<comment type="function">
    <text evidence="1">Involved in the biosynthesis of branched-chain polyamines, which support the growth of thermophiles under high-temperature conditions. Catalyzes the sequential condensation of spermidine with the aminopropyl groups of decarboxylated S-adenosylmethionines to produce N(4)-bis(aminopropyl)spermidine via N(4)-aminopropylspermidine.</text>
</comment>
<comment type="catalytic activity">
    <reaction evidence="1">
        <text>2 S-adenosyl 3-(methylsulfanyl)propylamine + spermidine = N(4)-bis(aminopropyl)spermidine + 2 S-methyl-5'-thioadenosine + 2 H(+)</text>
        <dbReference type="Rhea" id="RHEA:44132"/>
        <dbReference type="ChEBI" id="CHEBI:15378"/>
        <dbReference type="ChEBI" id="CHEBI:17509"/>
        <dbReference type="ChEBI" id="CHEBI:57443"/>
        <dbReference type="ChEBI" id="CHEBI:57834"/>
        <dbReference type="ChEBI" id="CHEBI:82771"/>
        <dbReference type="EC" id="2.5.1.128"/>
    </reaction>
</comment>
<comment type="pathway">
    <text evidence="1">Amine and polyamine biosynthesis.</text>
</comment>
<comment type="subcellular location">
    <subcellularLocation>
        <location evidence="1">Cytoplasm</location>
    </subcellularLocation>
</comment>
<comment type="similarity">
    <text evidence="1">Belongs to the branched-chain polyamine synthase family.</text>
</comment>
<organism>
    <name type="scientific">Thermus thermophilus</name>
    <dbReference type="NCBI Taxonomy" id="274"/>
    <lineage>
        <taxon>Bacteria</taxon>
        <taxon>Thermotogati</taxon>
        <taxon>Deinococcota</taxon>
        <taxon>Deinococci</taxon>
        <taxon>Thermales</taxon>
        <taxon>Thermaceae</taxon>
        <taxon>Thermus</taxon>
    </lineage>
</organism>
<keyword id="KW-0963">Cytoplasm</keyword>
<keyword id="KW-0620">Polyamine biosynthesis</keyword>
<keyword id="KW-0808">Transferase</keyword>
<protein>
    <recommendedName>
        <fullName evidence="1">N(4)-bis(aminopropyl)spermidine synthase</fullName>
        <ecNumber evidence="1">2.5.1.128</ecNumber>
    </recommendedName>
    <alternativeName>
        <fullName evidence="1">Branched-chain polyamine synthase A</fullName>
    </alternativeName>
</protein>
<proteinExistence type="inferred from homology"/>
<name>BPSA_THETH</name>
<feature type="chain" id="PRO_0000066474" description="N(4)-bis(aminopropyl)spermidine synthase">
    <location>
        <begin position="1"/>
        <end position="343"/>
    </location>
</feature>
<dbReference type="EC" id="2.5.1.128" evidence="1"/>
<dbReference type="EMBL" id="X54073">
    <property type="protein sequence ID" value="CAA38005.1"/>
    <property type="molecule type" value="Genomic_DNA"/>
</dbReference>
<dbReference type="PIR" id="S15949">
    <property type="entry name" value="S15949"/>
</dbReference>
<dbReference type="SMR" id="P25125"/>
<dbReference type="GO" id="GO:0005737">
    <property type="term" value="C:cytoplasm"/>
    <property type="evidence" value="ECO:0007669"/>
    <property type="project" value="UniProtKB-SubCell"/>
</dbReference>
<dbReference type="GO" id="GO:0016765">
    <property type="term" value="F:transferase activity, transferring alkyl or aryl (other than methyl) groups"/>
    <property type="evidence" value="ECO:0007669"/>
    <property type="project" value="UniProtKB-UniRule"/>
</dbReference>
<dbReference type="GO" id="GO:0006596">
    <property type="term" value="P:polyamine biosynthetic process"/>
    <property type="evidence" value="ECO:0007669"/>
    <property type="project" value="UniProtKB-UniRule"/>
</dbReference>
<dbReference type="Gene3D" id="3.40.50.150">
    <property type="entry name" value="Vaccinia Virus protein VP39"/>
    <property type="match status" value="1"/>
</dbReference>
<dbReference type="Gene3D" id="1.10.10.10">
    <property type="entry name" value="Winged helix-like DNA-binding domain superfamily/Winged helix DNA-binding domain"/>
    <property type="match status" value="1"/>
</dbReference>
<dbReference type="HAMAP" id="MF_01947">
    <property type="entry name" value="Aminopropyltransf_BpsA"/>
    <property type="match status" value="1"/>
</dbReference>
<dbReference type="InterPro" id="IPR014435">
    <property type="entry name" value="BpsA"/>
</dbReference>
<dbReference type="InterPro" id="IPR002723">
    <property type="entry name" value="BpsA_C"/>
</dbReference>
<dbReference type="InterPro" id="IPR051720">
    <property type="entry name" value="rRNA_MeTrfase/Polyamine_Synth"/>
</dbReference>
<dbReference type="InterPro" id="IPR029063">
    <property type="entry name" value="SAM-dependent_MTases_sf"/>
</dbReference>
<dbReference type="InterPro" id="IPR036388">
    <property type="entry name" value="WH-like_DNA-bd_sf"/>
</dbReference>
<dbReference type="PANTHER" id="PTHR23290">
    <property type="entry name" value="RRNA N6-ADENOSINE-METHYLTRANSFERASE METTL5"/>
    <property type="match status" value="1"/>
</dbReference>
<dbReference type="PANTHER" id="PTHR23290:SF0">
    <property type="entry name" value="RRNA N6-ADENOSINE-METHYLTRANSFERASE METTL5"/>
    <property type="match status" value="1"/>
</dbReference>
<dbReference type="Pfam" id="PF01861">
    <property type="entry name" value="BpsA_C"/>
    <property type="match status" value="1"/>
</dbReference>
<dbReference type="PIRSF" id="PIRSF005895">
    <property type="entry name" value="UCP005895_mtase"/>
    <property type="match status" value="1"/>
</dbReference>
<dbReference type="SUPFAM" id="SSF53335">
    <property type="entry name" value="S-adenosyl-L-methionine-dependent methyltransferases"/>
    <property type="match status" value="1"/>
</dbReference>
<accession>P25125</accession>
<reference key="1">
    <citation type="journal article" date="1991" name="Mol. Gen. Genet.">
        <title>Characterization of an operon encoding succinyl-CoA synthetase and malate dehydrogenase from Thermus flavus AT-62 and its expression in Escherichia coli.</title>
        <authorList>
            <person name="Nishiyama M."/>
            <person name="Horinouchi S."/>
            <person name="Beppu T."/>
        </authorList>
    </citation>
    <scope>NUCLEOTIDE SEQUENCE [GENOMIC DNA]</scope>
    <source>
        <strain>ATCC 33923 / DSM 674 / AT-62</strain>
    </source>
</reference>
<gene>
    <name evidence="1" type="primary">bpsA</name>
</gene>
<sequence>MNKEALVQVAEEVRRATGLPVGWRDVERTLGALRATRDLWEAVRLSRVPLRFLVPIWEGLARRGLLRVEEGLDLLAEVPAPRPGEAACPACEGRGLVGERLPGRAAERFLAWAKERPEAIQDFDQGYVTPESTLARVALAWNWGDLEGKEVLVLGDDDLTGLAAALTGLPKRVVVLDADPRIVRFLERAAKAEGLPLEAHVHDLREPLPEAWVHAFHTFFTDPVEGPLGLQAFVGRGLLALEGEGCAGYVGLTHVEASLAKWADFQRFLLENGAVITELRDGFHVYENWGYIEQMRAWPWLPVKRRPEKPWYTSALIRLELLRRADLENARVEGDLQDEEATY</sequence>
<evidence type="ECO:0000255" key="1">
    <source>
        <dbReference type="HAMAP-Rule" id="MF_01947"/>
    </source>
</evidence>